<evidence type="ECO:0000256" key="1">
    <source>
        <dbReference type="SAM" id="MobiDB-lite"/>
    </source>
</evidence>
<evidence type="ECO:0000305" key="2"/>
<name>CP090_BOVIN</name>
<protein>
    <recommendedName>
        <fullName>Uncharacterized protein C16orf90 homolog</fullName>
    </recommendedName>
</protein>
<reference key="1">
    <citation type="submission" date="2005-11" db="EMBL/GenBank/DDBJ databases">
        <authorList>
            <consortium name="NIH - Mammalian Gene Collection (MGC) project"/>
        </authorList>
    </citation>
    <scope>NUCLEOTIDE SEQUENCE [LARGE SCALE MRNA]</scope>
    <source>
        <strain>Crossbred X Angus</strain>
        <tissue>Liver</tissue>
    </source>
</reference>
<comment type="sequence caution" evidence="2">
    <conflict type="erroneous initiation">
        <sequence resource="EMBL-CDS" id="AAI09565"/>
    </conflict>
    <text>Extended N-terminus.</text>
</comment>
<sequence>MEALVYAVSWAPGRTSHPDTPPNIYEGGLGAQQKQCPSAQGSKPKNFRLRHLRGLALYLPGHLQPAGQCESHWLGRLLAGGCLPQPEGLVWPLDLAQGTVGRGNSHHSALLEAQLPRDSRGNTASSSSMDPAKGAPSQSGPPEGLGLRPKRSWGAPEETTCPLCKRTRSGGLERL</sequence>
<organism>
    <name type="scientific">Bos taurus</name>
    <name type="common">Bovine</name>
    <dbReference type="NCBI Taxonomy" id="9913"/>
    <lineage>
        <taxon>Eukaryota</taxon>
        <taxon>Metazoa</taxon>
        <taxon>Chordata</taxon>
        <taxon>Craniata</taxon>
        <taxon>Vertebrata</taxon>
        <taxon>Euteleostomi</taxon>
        <taxon>Mammalia</taxon>
        <taxon>Eutheria</taxon>
        <taxon>Laurasiatheria</taxon>
        <taxon>Artiodactyla</taxon>
        <taxon>Ruminantia</taxon>
        <taxon>Pecora</taxon>
        <taxon>Bovidae</taxon>
        <taxon>Bovinae</taxon>
        <taxon>Bos</taxon>
    </lineage>
</organism>
<feature type="chain" id="PRO_0000343580" description="Uncharacterized protein C16orf90 homolog">
    <location>
        <begin position="1"/>
        <end position="175"/>
    </location>
</feature>
<feature type="region of interest" description="Disordered" evidence="1">
    <location>
        <begin position="113"/>
        <end position="175"/>
    </location>
</feature>
<dbReference type="EMBL" id="BC109564">
    <property type="protein sequence ID" value="AAI09565.1"/>
    <property type="status" value="ALT_INIT"/>
    <property type="molecule type" value="mRNA"/>
</dbReference>
<dbReference type="RefSeq" id="NP_001193407.1">
    <property type="nucleotide sequence ID" value="NM_001206478.1"/>
</dbReference>
<dbReference type="FunCoup" id="Q32LI1">
    <property type="interactions" value="269"/>
</dbReference>
<dbReference type="PaxDb" id="9913-ENSBTAP00000000804"/>
<dbReference type="Ensembl" id="ENSBTAT00000000804.4">
    <property type="protein sequence ID" value="ENSBTAP00000000804.3"/>
    <property type="gene ID" value="ENSBTAG00000000611.4"/>
</dbReference>
<dbReference type="GeneID" id="767879"/>
<dbReference type="KEGG" id="bta:767879"/>
<dbReference type="CTD" id="767879"/>
<dbReference type="VEuPathDB" id="HostDB:ENSBTAG00000000611"/>
<dbReference type="VGNC" id="VGNC:58592">
    <property type="gene designation" value="C25H16orf90"/>
</dbReference>
<dbReference type="eggNOG" id="ENOG502SU94">
    <property type="taxonomic scope" value="Eukaryota"/>
</dbReference>
<dbReference type="GeneTree" id="ENSGT00390000014875"/>
<dbReference type="HOGENOM" id="CLU_125529_0_0_1"/>
<dbReference type="InParanoid" id="Q32LI1"/>
<dbReference type="OMA" id="MCKRTRP"/>
<dbReference type="OrthoDB" id="9829229at2759"/>
<dbReference type="TreeFam" id="TF337958"/>
<dbReference type="Proteomes" id="UP000009136">
    <property type="component" value="Chromosome 25"/>
</dbReference>
<dbReference type="Bgee" id="ENSBTAG00000000611">
    <property type="expression patterns" value="Expressed in semen and 8 other cell types or tissues"/>
</dbReference>
<dbReference type="InterPro" id="IPR027978">
    <property type="entry name" value="DUF4644"/>
</dbReference>
<dbReference type="PANTHER" id="PTHR37334">
    <property type="entry name" value="RGD1561796"/>
    <property type="match status" value="1"/>
</dbReference>
<dbReference type="PANTHER" id="PTHR37334:SF1">
    <property type="entry name" value="RGD1561796"/>
    <property type="match status" value="1"/>
</dbReference>
<dbReference type="Pfam" id="PF15486">
    <property type="entry name" value="DUF4644"/>
    <property type="match status" value="1"/>
</dbReference>
<proteinExistence type="evidence at transcript level"/>
<accession>Q32LI1</accession>
<keyword id="KW-1185">Reference proteome</keyword>